<keyword id="KW-0175">Coiled coil</keyword>
<keyword id="KW-0963">Cytoplasm</keyword>
<keyword id="KW-0206">Cytoskeleton</keyword>
<keyword id="KW-0472">Membrane</keyword>
<keyword id="KW-0493">Microtubule</keyword>
<keyword id="KW-0597">Phosphoprotein</keyword>
<keyword id="KW-1185">Reference proteome</keyword>
<keyword id="KW-0812">Transmembrane</keyword>
<keyword id="KW-1133">Transmembrane helix</keyword>
<gene>
    <name type="primary">Rmdn2</name>
    <name type="synonym">Fam82a</name>
    <name type="synonym">Fam82a1</name>
</gene>
<accession>Q498D5</accession>
<name>RMD2_RAT</name>
<reference key="1">
    <citation type="journal article" date="2004" name="Genome Res.">
        <title>The status, quality, and expansion of the NIH full-length cDNA project: the Mammalian Gene Collection (MGC).</title>
        <authorList>
            <consortium name="The MGC Project Team"/>
        </authorList>
    </citation>
    <scope>NUCLEOTIDE SEQUENCE [LARGE SCALE MRNA]</scope>
    <source>
        <tissue>Liver</tissue>
    </source>
</reference>
<reference key="2">
    <citation type="journal article" date="2012" name="Nat. Commun.">
        <title>Quantitative maps of protein phosphorylation sites across 14 different rat organs and tissues.</title>
        <authorList>
            <person name="Lundby A."/>
            <person name="Secher A."/>
            <person name="Lage K."/>
            <person name="Nordsborg N.B."/>
            <person name="Dmytriyev A."/>
            <person name="Lundby C."/>
            <person name="Olsen J.V."/>
        </authorList>
    </citation>
    <scope>PHOSPHORYLATION [LARGE SCALE ANALYSIS] AT SER-121</scope>
    <scope>IDENTIFICATION BY MASS SPECTROMETRY [LARGE SCALE ANALYSIS]</scope>
</reference>
<proteinExistence type="evidence at protein level"/>
<dbReference type="EMBL" id="BC100261">
    <property type="protein sequence ID" value="AAI00262.1"/>
    <property type="molecule type" value="mRNA"/>
</dbReference>
<dbReference type="RefSeq" id="NP_001032277.1">
    <property type="nucleotide sequence ID" value="NM_001037200.2"/>
</dbReference>
<dbReference type="RefSeq" id="NP_001388251.1">
    <property type="nucleotide sequence ID" value="NM_001401322.1"/>
</dbReference>
<dbReference type="RefSeq" id="XP_006239697.1">
    <property type="nucleotide sequence ID" value="XM_006239635.3"/>
</dbReference>
<dbReference type="RefSeq" id="XP_063117892.1">
    <property type="nucleotide sequence ID" value="XM_063261822.1"/>
</dbReference>
<dbReference type="SMR" id="Q498D5"/>
<dbReference type="FunCoup" id="Q498D5">
    <property type="interactions" value="200"/>
</dbReference>
<dbReference type="STRING" id="10116.ENSRNOP00000008045"/>
<dbReference type="iPTMnet" id="Q498D5"/>
<dbReference type="PhosphoSitePlus" id="Q498D5"/>
<dbReference type="PaxDb" id="10116-ENSRNOP00000008045"/>
<dbReference type="Ensembl" id="ENSRNOT00000008045.6">
    <property type="protein sequence ID" value="ENSRNOP00000008045.4"/>
    <property type="gene ID" value="ENSRNOG00000006082.7"/>
</dbReference>
<dbReference type="GeneID" id="313840"/>
<dbReference type="KEGG" id="rno:313840"/>
<dbReference type="UCSC" id="RGD:1559836">
    <property type="organism name" value="rat"/>
</dbReference>
<dbReference type="AGR" id="RGD:1559836"/>
<dbReference type="CTD" id="151393"/>
<dbReference type="RGD" id="1559836">
    <property type="gene designation" value="Rmdn2"/>
</dbReference>
<dbReference type="eggNOG" id="ENOG502QS2U">
    <property type="taxonomic scope" value="Eukaryota"/>
</dbReference>
<dbReference type="GeneTree" id="ENSGT00950000182992"/>
<dbReference type="HOGENOM" id="CLU_046369_0_0_1"/>
<dbReference type="InParanoid" id="Q498D5"/>
<dbReference type="OMA" id="KCAESHQ"/>
<dbReference type="PhylomeDB" id="Q498D5"/>
<dbReference type="TreeFam" id="TF315854"/>
<dbReference type="PRO" id="PR:Q498D5"/>
<dbReference type="Proteomes" id="UP000002494">
    <property type="component" value="Chromosome 6"/>
</dbReference>
<dbReference type="Bgee" id="ENSRNOG00000006082">
    <property type="expression patterns" value="Expressed in ovary and 19 other cell types or tissues"/>
</dbReference>
<dbReference type="GO" id="GO:0005737">
    <property type="term" value="C:cytoplasm"/>
    <property type="evidence" value="ECO:0000318"/>
    <property type="project" value="GO_Central"/>
</dbReference>
<dbReference type="GO" id="GO:0016020">
    <property type="term" value="C:membrane"/>
    <property type="evidence" value="ECO:0007669"/>
    <property type="project" value="UniProtKB-SubCell"/>
</dbReference>
<dbReference type="GO" id="GO:0005739">
    <property type="term" value="C:mitochondrion"/>
    <property type="evidence" value="ECO:0000318"/>
    <property type="project" value="GO_Central"/>
</dbReference>
<dbReference type="GO" id="GO:0097431">
    <property type="term" value="C:mitotic spindle pole"/>
    <property type="evidence" value="ECO:0000266"/>
    <property type="project" value="RGD"/>
</dbReference>
<dbReference type="GO" id="GO:0005876">
    <property type="term" value="C:spindle microtubule"/>
    <property type="evidence" value="ECO:0000266"/>
    <property type="project" value="RGD"/>
</dbReference>
<dbReference type="GO" id="GO:0008017">
    <property type="term" value="F:microtubule binding"/>
    <property type="evidence" value="ECO:0000266"/>
    <property type="project" value="RGD"/>
</dbReference>
<dbReference type="Gene3D" id="1.25.40.10">
    <property type="entry name" value="Tetratricopeptide repeat domain"/>
    <property type="match status" value="1"/>
</dbReference>
<dbReference type="InterPro" id="IPR049039">
    <property type="entry name" value="RMD1-3_a_helical_rpt"/>
</dbReference>
<dbReference type="InterPro" id="IPR011990">
    <property type="entry name" value="TPR-like_helical_dom_sf"/>
</dbReference>
<dbReference type="PANTHER" id="PTHR16056">
    <property type="entry name" value="REGULATOR OF MICROTUBULE DYNAMICS PROTEIN"/>
    <property type="match status" value="1"/>
</dbReference>
<dbReference type="PANTHER" id="PTHR16056:SF15">
    <property type="entry name" value="REGULATOR OF MICROTUBULE DYNAMICS PROTEIN 2"/>
    <property type="match status" value="1"/>
</dbReference>
<dbReference type="Pfam" id="PF21033">
    <property type="entry name" value="RMD1-3"/>
    <property type="match status" value="1"/>
</dbReference>
<dbReference type="SUPFAM" id="SSF48452">
    <property type="entry name" value="TPR-like"/>
    <property type="match status" value="1"/>
</dbReference>
<comment type="subunit">
    <text evidence="1">Interacts with microtubules.</text>
</comment>
<comment type="subcellular location">
    <subcellularLocation>
        <location evidence="6">Membrane</location>
        <topology evidence="6">Single-pass membrane protein</topology>
    </subcellularLocation>
    <subcellularLocation>
        <location>Cytoplasm</location>
    </subcellularLocation>
    <subcellularLocation>
        <location evidence="1">Cytoplasm</location>
        <location evidence="1">Cytoskeleton</location>
        <location evidence="1">Spindle</location>
    </subcellularLocation>
    <subcellularLocation>
        <location evidence="1">Cytoplasm</location>
        <location evidence="1">Cytoskeleton</location>
        <location evidence="1">Spindle pole</location>
    </subcellularLocation>
    <text evidence="1">In interphase localizes in the cytoplasm, and during mitosis localizes to the spindle microtubules and spindle poles. Also detected as large dots in the perinuclear region (By similarity).</text>
</comment>
<comment type="similarity">
    <text evidence="6">Belongs to the RMDN family.</text>
</comment>
<protein>
    <recommendedName>
        <fullName>Regulator of microtubule dynamics protein 2</fullName>
        <shortName>RMD-2</shortName>
    </recommendedName>
    <alternativeName>
        <fullName>Protein FAM82A1</fullName>
    </alternativeName>
</protein>
<feature type="chain" id="PRO_0000287507" description="Regulator of microtubule dynamics protein 2">
    <location>
        <begin position="1"/>
        <end position="412"/>
    </location>
</feature>
<feature type="transmembrane region" description="Helical" evidence="4">
    <location>
        <begin position="9"/>
        <end position="28"/>
    </location>
</feature>
<feature type="region of interest" description="Disordered" evidence="5">
    <location>
        <begin position="122"/>
        <end position="153"/>
    </location>
</feature>
<feature type="coiled-coil region" evidence="4">
    <location>
        <begin position="72"/>
        <end position="110"/>
    </location>
</feature>
<feature type="modified residue" description="Phosphoserine" evidence="2">
    <location>
        <position position="51"/>
    </location>
</feature>
<feature type="modified residue" description="Phosphoserine" evidence="7">
    <location>
        <position position="121"/>
    </location>
</feature>
<feature type="modified residue" description="Phosphothreonine" evidence="3">
    <location>
        <position position="141"/>
    </location>
</feature>
<feature type="modified residue" description="Phosphotyrosine" evidence="3">
    <location>
        <position position="154"/>
    </location>
</feature>
<feature type="modified residue" description="Phosphothreonine" evidence="3">
    <location>
        <position position="156"/>
    </location>
</feature>
<feature type="modified residue" description="Phosphothreonine" evidence="3">
    <location>
        <position position="159"/>
    </location>
</feature>
<sequence length="412" mass="47217">MPHSTHKELLLGIMAGTAGISLLVLWYHKILKPRTTMIFPKFLSLGKKSDSLTLQDESYSEQGTSVVFQRGQLQILEKLNELLTNVEELKEEIKFLKETIPKLEECIQDELGVRVTVHQVSPQHRARKKKTTTTTVQRPATSNSSEEAESEGGYITANTDTEEQSFPVPKALNTHIEDLKLDVLLQKVDHLRLNEAHKMESFELLCDHKEKFSEEIEFLWRLVRAYGDMYDLSTNTQEKKHYANVGKTLGERAITRAPMNGHCHLWYALLCGYVSEFEGLQNKINCGHLFKKHLDIAIQLLPEEPVLYYLKGRYCYTVSKLSWIEKKMAATLFGEIPSSTVHEALHNFLKTEELQPGYSVSNYMYVAKCYVDLGESREAWKFCNLALLLPIVTKEDKDAHKEVKKIIGSLKR</sequence>
<organism>
    <name type="scientific">Rattus norvegicus</name>
    <name type="common">Rat</name>
    <dbReference type="NCBI Taxonomy" id="10116"/>
    <lineage>
        <taxon>Eukaryota</taxon>
        <taxon>Metazoa</taxon>
        <taxon>Chordata</taxon>
        <taxon>Craniata</taxon>
        <taxon>Vertebrata</taxon>
        <taxon>Euteleostomi</taxon>
        <taxon>Mammalia</taxon>
        <taxon>Eutheria</taxon>
        <taxon>Euarchontoglires</taxon>
        <taxon>Glires</taxon>
        <taxon>Rodentia</taxon>
        <taxon>Myomorpha</taxon>
        <taxon>Muroidea</taxon>
        <taxon>Muridae</taxon>
        <taxon>Murinae</taxon>
        <taxon>Rattus</taxon>
    </lineage>
</organism>
<evidence type="ECO:0000250" key="1"/>
<evidence type="ECO:0000250" key="2">
    <source>
        <dbReference type="UniProtKB" id="Q8BSE0"/>
    </source>
</evidence>
<evidence type="ECO:0000250" key="3">
    <source>
        <dbReference type="UniProtKB" id="Q96LZ7"/>
    </source>
</evidence>
<evidence type="ECO:0000255" key="4"/>
<evidence type="ECO:0000256" key="5">
    <source>
        <dbReference type="SAM" id="MobiDB-lite"/>
    </source>
</evidence>
<evidence type="ECO:0000305" key="6"/>
<evidence type="ECO:0007744" key="7">
    <source>
    </source>
</evidence>